<proteinExistence type="inferred from homology"/>
<organism>
    <name type="scientific">Prochlorococcus marinus (strain NATL1A)</name>
    <dbReference type="NCBI Taxonomy" id="167555"/>
    <lineage>
        <taxon>Bacteria</taxon>
        <taxon>Bacillati</taxon>
        <taxon>Cyanobacteriota</taxon>
        <taxon>Cyanophyceae</taxon>
        <taxon>Synechococcales</taxon>
        <taxon>Prochlorococcaceae</taxon>
        <taxon>Prochlorococcus</taxon>
    </lineage>
</organism>
<dbReference type="EC" id="7.1.1.-" evidence="1"/>
<dbReference type="EMBL" id="CP000553">
    <property type="protein sequence ID" value="ABM74757.1"/>
    <property type="molecule type" value="Genomic_DNA"/>
</dbReference>
<dbReference type="RefSeq" id="WP_011822982.1">
    <property type="nucleotide sequence ID" value="NC_008819.1"/>
</dbReference>
<dbReference type="SMR" id="A2BZU7"/>
<dbReference type="KEGG" id="pme:NATL1_01931"/>
<dbReference type="eggNOG" id="ENOG50345U2">
    <property type="taxonomic scope" value="Bacteria"/>
</dbReference>
<dbReference type="HOGENOM" id="CLU_195299_0_0_3"/>
<dbReference type="Proteomes" id="UP000002592">
    <property type="component" value="Chromosome"/>
</dbReference>
<dbReference type="GO" id="GO:0031676">
    <property type="term" value="C:plasma membrane-derived thylakoid membrane"/>
    <property type="evidence" value="ECO:0007669"/>
    <property type="project" value="UniProtKB-SubCell"/>
</dbReference>
<dbReference type="GO" id="GO:0016655">
    <property type="term" value="F:oxidoreductase activity, acting on NAD(P)H, quinone or similar compound as acceptor"/>
    <property type="evidence" value="ECO:0007669"/>
    <property type="project" value="UniProtKB-UniRule"/>
</dbReference>
<dbReference type="GO" id="GO:0048038">
    <property type="term" value="F:quinone binding"/>
    <property type="evidence" value="ECO:0007669"/>
    <property type="project" value="UniProtKB-KW"/>
</dbReference>
<dbReference type="HAMAP" id="MF_01354">
    <property type="entry name" value="NDH1_NDH1O"/>
    <property type="match status" value="1"/>
</dbReference>
<dbReference type="InterPro" id="IPR020905">
    <property type="entry name" value="NdhO"/>
</dbReference>
<dbReference type="Pfam" id="PF11910">
    <property type="entry name" value="NdhO"/>
    <property type="match status" value="1"/>
</dbReference>
<protein>
    <recommendedName>
        <fullName evidence="1">NAD(P)H-quinone oxidoreductase subunit O</fullName>
        <ecNumber evidence="1">7.1.1.-</ecNumber>
    </recommendedName>
    <alternativeName>
        <fullName evidence="1">NAD(P)H dehydrogenase I subunit O</fullName>
    </alternativeName>
    <alternativeName>
        <fullName>NDH-1 subunit O</fullName>
    </alternativeName>
    <alternativeName>
        <fullName>NDH-O</fullName>
    </alternativeName>
</protein>
<sequence length="87" mass="10012">MSEQTGKVDDSQSPPKVQKKLRKGDLVKVDREKYSNSLESKASDTNLPEYIFQGPGEVLLIKGDYCQVRWRRPVPDVWMNSDHIVSY</sequence>
<reference key="1">
    <citation type="journal article" date="2007" name="PLoS Genet.">
        <title>Patterns and implications of gene gain and loss in the evolution of Prochlorococcus.</title>
        <authorList>
            <person name="Kettler G.C."/>
            <person name="Martiny A.C."/>
            <person name="Huang K."/>
            <person name="Zucker J."/>
            <person name="Coleman M.L."/>
            <person name="Rodrigue S."/>
            <person name="Chen F."/>
            <person name="Lapidus A."/>
            <person name="Ferriera S."/>
            <person name="Johnson J."/>
            <person name="Steglich C."/>
            <person name="Church G.M."/>
            <person name="Richardson P."/>
            <person name="Chisholm S.W."/>
        </authorList>
    </citation>
    <scope>NUCLEOTIDE SEQUENCE [LARGE SCALE GENOMIC DNA]</scope>
    <source>
        <strain>NATL1A</strain>
    </source>
</reference>
<gene>
    <name evidence="1" type="primary">ndhO</name>
    <name type="ordered locus">NATL1_01931</name>
</gene>
<comment type="function">
    <text evidence="1">NDH-1 shuttles electrons from an unknown electron donor, via FMN and iron-sulfur (Fe-S) centers, to quinones in the respiratory and/or the photosynthetic chain. The immediate electron acceptor for the enzyme in this species is believed to be plastoquinone. Couples the redox reaction to proton translocation, and thus conserves the redox energy in a proton gradient. Cyanobacterial NDH-1 also plays a role in inorganic carbon-concentration.</text>
</comment>
<comment type="catalytic activity">
    <reaction evidence="1">
        <text>a plastoquinone + NADH + (n+1) H(+)(in) = a plastoquinol + NAD(+) + n H(+)(out)</text>
        <dbReference type="Rhea" id="RHEA:42608"/>
        <dbReference type="Rhea" id="RHEA-COMP:9561"/>
        <dbReference type="Rhea" id="RHEA-COMP:9562"/>
        <dbReference type="ChEBI" id="CHEBI:15378"/>
        <dbReference type="ChEBI" id="CHEBI:17757"/>
        <dbReference type="ChEBI" id="CHEBI:57540"/>
        <dbReference type="ChEBI" id="CHEBI:57945"/>
        <dbReference type="ChEBI" id="CHEBI:62192"/>
    </reaction>
</comment>
<comment type="catalytic activity">
    <reaction evidence="1">
        <text>a plastoquinone + NADPH + (n+1) H(+)(in) = a plastoquinol + NADP(+) + n H(+)(out)</text>
        <dbReference type="Rhea" id="RHEA:42612"/>
        <dbReference type="Rhea" id="RHEA-COMP:9561"/>
        <dbReference type="Rhea" id="RHEA-COMP:9562"/>
        <dbReference type="ChEBI" id="CHEBI:15378"/>
        <dbReference type="ChEBI" id="CHEBI:17757"/>
        <dbReference type="ChEBI" id="CHEBI:57783"/>
        <dbReference type="ChEBI" id="CHEBI:58349"/>
        <dbReference type="ChEBI" id="CHEBI:62192"/>
    </reaction>
</comment>
<comment type="subunit">
    <text evidence="1">NDH-1 can be composed of about 15 different subunits; different subcomplexes with different compositions have been identified which probably have different functions.</text>
</comment>
<comment type="subcellular location">
    <subcellularLocation>
        <location evidence="1">Cellular thylakoid membrane</location>
        <topology evidence="1">Peripheral membrane protein</topology>
        <orientation evidence="1">Cytoplasmic side</orientation>
    </subcellularLocation>
</comment>
<comment type="similarity">
    <text evidence="1">Belongs to the complex I NdhO subunit family.</text>
</comment>
<evidence type="ECO:0000255" key="1">
    <source>
        <dbReference type="HAMAP-Rule" id="MF_01354"/>
    </source>
</evidence>
<evidence type="ECO:0000256" key="2">
    <source>
        <dbReference type="SAM" id="MobiDB-lite"/>
    </source>
</evidence>
<name>NDHO_PROM1</name>
<feature type="chain" id="PRO_0000353647" description="NAD(P)H-quinone oxidoreductase subunit O">
    <location>
        <begin position="1"/>
        <end position="87"/>
    </location>
</feature>
<feature type="region of interest" description="Disordered" evidence="2">
    <location>
        <begin position="1"/>
        <end position="26"/>
    </location>
</feature>
<feature type="compositionally biased region" description="Basic and acidic residues" evidence="2">
    <location>
        <begin position="1"/>
        <end position="10"/>
    </location>
</feature>
<accession>A2BZU7</accession>
<keyword id="KW-0472">Membrane</keyword>
<keyword id="KW-0520">NAD</keyword>
<keyword id="KW-0521">NADP</keyword>
<keyword id="KW-0618">Plastoquinone</keyword>
<keyword id="KW-0874">Quinone</keyword>
<keyword id="KW-0793">Thylakoid</keyword>
<keyword id="KW-1278">Translocase</keyword>
<keyword id="KW-0813">Transport</keyword>